<name>IF4A3_MOUSE</name>
<protein>
    <recommendedName>
        <fullName>Eukaryotic initiation factor 4A-III</fullName>
        <shortName>eIF-4A-III</shortName>
        <shortName>eIF4A-III</shortName>
        <ecNumber evidence="1">3.6.4.13</ecNumber>
    </recommendedName>
    <alternativeName>
        <fullName>ATP-dependent RNA helicase DDX48</fullName>
    </alternativeName>
    <alternativeName>
        <fullName>ATP-dependent RNA helicase eIF4A-3</fullName>
    </alternativeName>
    <alternativeName>
        <fullName>DEAD box protein 48</fullName>
    </alternativeName>
    <alternativeName>
        <fullName>Eukaryotic translation initiation factor 4A isoform 3</fullName>
    </alternativeName>
    <component>
        <recommendedName>
            <fullName>Eukaryotic initiation factor 4A-III, N-terminally processed</fullName>
        </recommendedName>
    </component>
</protein>
<keyword id="KW-0007">Acetylation</keyword>
<keyword id="KW-0067">ATP-binding</keyword>
<keyword id="KW-0963">Cytoplasm</keyword>
<keyword id="KW-0347">Helicase</keyword>
<keyword id="KW-0378">Hydrolase</keyword>
<keyword id="KW-1017">Isopeptide bond</keyword>
<keyword id="KW-0507">mRNA processing</keyword>
<keyword id="KW-0508">mRNA splicing</keyword>
<keyword id="KW-0509">mRNA transport</keyword>
<keyword id="KW-0866">Nonsense-mediated mRNA decay</keyword>
<keyword id="KW-0547">Nucleotide-binding</keyword>
<keyword id="KW-0539">Nucleus</keyword>
<keyword id="KW-0597">Phosphoprotein</keyword>
<keyword id="KW-1185">Reference proteome</keyword>
<keyword id="KW-0694">RNA-binding</keyword>
<keyword id="KW-0698">rRNA processing</keyword>
<keyword id="KW-0747">Spliceosome</keyword>
<keyword id="KW-0810">Translation regulation</keyword>
<keyword id="KW-0813">Transport</keyword>
<keyword id="KW-0832">Ubl conjugation</keyword>
<organism>
    <name type="scientific">Mus musculus</name>
    <name type="common">Mouse</name>
    <dbReference type="NCBI Taxonomy" id="10090"/>
    <lineage>
        <taxon>Eukaryota</taxon>
        <taxon>Metazoa</taxon>
        <taxon>Chordata</taxon>
        <taxon>Craniata</taxon>
        <taxon>Vertebrata</taxon>
        <taxon>Euteleostomi</taxon>
        <taxon>Mammalia</taxon>
        <taxon>Eutheria</taxon>
        <taxon>Euarchontoglires</taxon>
        <taxon>Glires</taxon>
        <taxon>Rodentia</taxon>
        <taxon>Myomorpha</taxon>
        <taxon>Muroidea</taxon>
        <taxon>Muridae</taxon>
        <taxon>Murinae</taxon>
        <taxon>Mus</taxon>
        <taxon>Mus</taxon>
    </lineage>
</organism>
<gene>
    <name type="primary">Eif4a3</name>
    <name type="synonym">Ddx48</name>
</gene>
<sequence>MAANATMATSGSARKRLLKEEDMTKVEFETSEEVDVTPTFDTMGLREDLLRGIYAYGFEKPSAIQQRAIKQIIKGRDVIAQSQSGTGKTATFSVSVLQCLDIQVRETQALILAPTRELAVQIQKGLLALGDYMNVQCHACIGGTNVGEDIRKLDYGQHVVAGTPGRVFDMIRRRSLRTRAIKMLVLDEADEMLNKGFKEQIYDVYRYLPPATQVVLISATLPHEILEMTNKFMTDPIRILVKRDELTLEGIKQFFVAVEREEWKFDTLCDLYDTLTITQAVIFCNTKRKVDWLTEKMREANFTVSSMHGDMPQKERESIMKEFRSGASRVLISTDVWARGLDVPQVSLIINYDLPNNRELYIHRIGRSGRYGRKGVAINFVKNDDIRILRDIEQYYSTQIDEMPMNVADLI</sequence>
<accession>Q91VC3</accession>
<accession>B2RY38</accession>
<accession>Q3TEZ8</accession>
<accession>Q3UD29</accession>
<accession>Q8BVY3</accession>
<proteinExistence type="evidence at protein level"/>
<comment type="function">
    <text evidence="1">ATP-dependent RNA helicase. Involved in pre-mRNA splicing as component of the spliceosome. Core component of the splicing-dependent multiprotein exon junction complex (EJC) deposited at splice junctions on mRNAs. The EJC is a dynamic structure consisting of core proteins and several peripheral nuclear and cytoplasmic associated factors that join the complex only transiently either during EJC assembly or during subsequent mRNA metabolism. The EJC marks the position of the exon-exon junction in the mature mRNA for the gene expression machinery and the core components remain bound to spliced mRNAs throughout all stages of mRNA metabolism thereby influencing downstream processes including nuclear mRNA export, subcellular mRNA localization, translation efficiency and nonsense-mediated mRNA decay (NMD). Its RNA-dependent ATPase and RNA-helicase activities are induced by CASC3, but abolished in presence of the MAGOH-RBM8A heterodimer, thereby trapping the ATP-bound EJC core onto spliced mRNA in a stable conformation. The inhibition of ATPase activity by the MAGOH-RBM8A heterodimer increases the RNA-binding affinity of the EJC. Involved in translational enhancement of spliced mRNAs after formation of the 80S ribosome complex. Binds spliced mRNA in sequence-independent manner, 20-24 nucleotides upstream of mRNA exon-exon junctions. Shows higher affinity for single-stranded RNA in an ATP-bound core EJC complex than after the ATP is hydrolyzed. Involved in the splicing modulation of BCL2L1/Bcl-X (and probably other apoptotic genes); specifically inhibits formation of proapoptotic isoforms; the function is different from the established EJC assembly. Involved in craniofacial development.</text>
</comment>
<comment type="catalytic activity">
    <reaction evidence="1">
        <text>ATP + H2O = ADP + phosphate + H(+)</text>
        <dbReference type="Rhea" id="RHEA:13065"/>
        <dbReference type="ChEBI" id="CHEBI:15377"/>
        <dbReference type="ChEBI" id="CHEBI:15378"/>
        <dbReference type="ChEBI" id="CHEBI:30616"/>
        <dbReference type="ChEBI" id="CHEBI:43474"/>
        <dbReference type="ChEBI" id="CHEBI:456216"/>
        <dbReference type="EC" id="3.6.4.13"/>
    </reaction>
</comment>
<comment type="activity regulation">
    <text evidence="1">The ATPase activity is increased some 4-fold in the presence of RNA.</text>
</comment>
<comment type="subunit">
    <text evidence="1">Identified in the spliceosome C complex. Core component of the mRNA splicing-dependent exon junction complex (EJC); the core complex contains CASC3, EIF4A3, MAGOH or MAGOHB, and RBM8A. Interacts with CASC3, MAGOH, NXF1, RBM8A and ALYREF/THOC4. Component of the ALYREF/THOC4-EJC-RNA complex; in the complex interacts with MAGOH, RBM8A and THOC4 (via the WXHD motif); these interactions are likely specific to RNA-bound EJC (By similarity). May interact with NOM1. Interacts with POLDIP3. Interacts with CWC22 and PRPF19 in an RNA-independent manner. Direct interaction with CWC22 is mediated by the helicase C-terminal domain. Full interaction with CWC22 occurs only when EIF4A3 is not part of the EJC and prevents EIF4A3 binding to RNA. Identified in a complex composed of the EJC core, UPF3B and UPF2. The EJC core can also interact with UPF3A (in vitro). Interacts with NCBP3 (By similarity). Interacts with NRDE2 (By similarity). Interacts with DHX34; the interaction is RNA-independent (By similarity).</text>
</comment>
<comment type="subcellular location">
    <subcellularLocation>
        <location evidence="4">Nucleus</location>
    </subcellularLocation>
    <subcellularLocation>
        <location evidence="1">Nucleus speckle</location>
    </subcellularLocation>
    <subcellularLocation>
        <location evidence="4">Cytoplasm</location>
    </subcellularLocation>
    <text evidence="4">Nucleocytoplasmic shuttling protein. Travels to the cytoplasm as part of the exon junction complex (EJC) bound to mRNA. Detected in dendritic layer as well as the nuclear and cytoplasmic (somatic) compartments of neurons. Colocalizes with STAU1 and FMR1 in dendrites.</text>
</comment>
<comment type="similarity">
    <text evidence="7">Belongs to the DEAD box helicase family. eIF4A subfamily.</text>
</comment>
<dbReference type="EC" id="3.6.4.13" evidence="1"/>
<dbReference type="EMBL" id="AK075920">
    <property type="protein sequence ID" value="BAC36054.1"/>
    <property type="molecule type" value="mRNA"/>
</dbReference>
<dbReference type="EMBL" id="AK146385">
    <property type="protein sequence ID" value="BAE27130.1"/>
    <property type="molecule type" value="mRNA"/>
</dbReference>
<dbReference type="EMBL" id="AK150277">
    <property type="protein sequence ID" value="BAE29433.1"/>
    <property type="molecule type" value="mRNA"/>
</dbReference>
<dbReference type="EMBL" id="AK152824">
    <property type="protein sequence ID" value="BAE31525.1"/>
    <property type="molecule type" value="mRNA"/>
</dbReference>
<dbReference type="EMBL" id="AK153359">
    <property type="protein sequence ID" value="BAE31931.1"/>
    <property type="molecule type" value="mRNA"/>
</dbReference>
<dbReference type="EMBL" id="AK157855">
    <property type="protein sequence ID" value="BAE34233.1"/>
    <property type="molecule type" value="mRNA"/>
</dbReference>
<dbReference type="EMBL" id="AK167107">
    <property type="protein sequence ID" value="BAE39256.1"/>
    <property type="molecule type" value="mRNA"/>
</dbReference>
<dbReference type="EMBL" id="AK168319">
    <property type="protein sequence ID" value="BAE40258.1"/>
    <property type="molecule type" value="mRNA"/>
</dbReference>
<dbReference type="EMBL" id="AK169350">
    <property type="protein sequence ID" value="BAE41100.1"/>
    <property type="molecule type" value="mRNA"/>
</dbReference>
<dbReference type="EMBL" id="AK169815">
    <property type="protein sequence ID" value="BAE41387.1"/>
    <property type="molecule type" value="mRNA"/>
</dbReference>
<dbReference type="EMBL" id="AL645911">
    <property type="status" value="NOT_ANNOTATED_CDS"/>
    <property type="molecule type" value="Genomic_DNA"/>
</dbReference>
<dbReference type="EMBL" id="AL672140">
    <property type="status" value="NOT_ANNOTATED_CDS"/>
    <property type="molecule type" value="Genomic_DNA"/>
</dbReference>
<dbReference type="EMBL" id="CH466558">
    <property type="protein sequence ID" value="EDL34693.1"/>
    <property type="molecule type" value="Genomic_DNA"/>
</dbReference>
<dbReference type="EMBL" id="BC008132">
    <property type="protein sequence ID" value="AAH08132.1"/>
    <property type="molecule type" value="mRNA"/>
</dbReference>
<dbReference type="EMBL" id="BC012862">
    <property type="protein sequence ID" value="AAH12862.1"/>
    <property type="molecule type" value="mRNA"/>
</dbReference>
<dbReference type="EMBL" id="BC158083">
    <property type="protein sequence ID" value="AAI58084.1"/>
    <property type="molecule type" value="mRNA"/>
</dbReference>
<dbReference type="CCDS" id="CCDS25714.1"/>
<dbReference type="RefSeq" id="NP_619610.1">
    <property type="nucleotide sequence ID" value="NM_138669.1"/>
</dbReference>
<dbReference type="SMR" id="Q91VC3"/>
<dbReference type="BioGRID" id="228659">
    <property type="interactions" value="73"/>
</dbReference>
<dbReference type="ComplexPortal" id="CPX-635">
    <property type="entry name" value="Exon junction core complex, Magoh variant"/>
</dbReference>
<dbReference type="ComplexPortal" id="CPX-683">
    <property type="entry name" value="Exon junction core complex, Magohb variant"/>
</dbReference>
<dbReference type="FunCoup" id="Q91VC3">
    <property type="interactions" value="3282"/>
</dbReference>
<dbReference type="IntAct" id="Q91VC3">
    <property type="interactions" value="7"/>
</dbReference>
<dbReference type="STRING" id="10090.ENSMUSP00000026667"/>
<dbReference type="ChEMBL" id="CHEMBL3751651"/>
<dbReference type="GlyGen" id="Q91VC3">
    <property type="glycosylation" value="4 sites, 2 N-linked glycans (2 sites), 1 O-linked glycan (1 site)"/>
</dbReference>
<dbReference type="iPTMnet" id="Q91VC3"/>
<dbReference type="PhosphoSitePlus" id="Q91VC3"/>
<dbReference type="SwissPalm" id="Q91VC3"/>
<dbReference type="jPOST" id="Q91VC3"/>
<dbReference type="PaxDb" id="10090-ENSMUSP00000026667"/>
<dbReference type="PeptideAtlas" id="Q91VC3"/>
<dbReference type="ProteomicsDB" id="267099"/>
<dbReference type="Pumba" id="Q91VC3"/>
<dbReference type="DNASU" id="192170"/>
<dbReference type="Ensembl" id="ENSMUST00000026667.15">
    <property type="protein sequence ID" value="ENSMUSP00000026667.9"/>
    <property type="gene ID" value="ENSMUSG00000025580.16"/>
</dbReference>
<dbReference type="GeneID" id="192170"/>
<dbReference type="KEGG" id="mmu:192170"/>
<dbReference type="UCSC" id="uc007mqj.1">
    <property type="organism name" value="mouse"/>
</dbReference>
<dbReference type="AGR" id="MGI:1923731"/>
<dbReference type="CTD" id="9775"/>
<dbReference type="MGI" id="MGI:1923731">
    <property type="gene designation" value="Eif4a3"/>
</dbReference>
<dbReference type="VEuPathDB" id="HostDB:ENSMUSG00000025580"/>
<dbReference type="eggNOG" id="KOG0328">
    <property type="taxonomic scope" value="Eukaryota"/>
</dbReference>
<dbReference type="GeneTree" id="ENSGT00940000155037"/>
<dbReference type="HOGENOM" id="CLU_003041_1_0_1"/>
<dbReference type="InParanoid" id="Q91VC3"/>
<dbReference type="OMA" id="TRFHDFK"/>
<dbReference type="OrthoDB" id="10265785at2759"/>
<dbReference type="PhylomeDB" id="Q91VC3"/>
<dbReference type="TreeFam" id="TF300466"/>
<dbReference type="Reactome" id="R-MMU-1169408">
    <property type="pathway name" value="ISG15 antiviral mechanism"/>
</dbReference>
<dbReference type="Reactome" id="R-MMU-159236">
    <property type="pathway name" value="Transport of Mature mRNA derived from an Intron-Containing Transcript"/>
</dbReference>
<dbReference type="Reactome" id="R-MMU-429947">
    <property type="pathway name" value="Deadenylation of mRNA"/>
</dbReference>
<dbReference type="Reactome" id="R-MMU-72163">
    <property type="pathway name" value="mRNA Splicing - Major Pathway"/>
</dbReference>
<dbReference type="Reactome" id="R-MMU-72187">
    <property type="pathway name" value="mRNA 3'-end processing"/>
</dbReference>
<dbReference type="Reactome" id="R-MMU-73856">
    <property type="pathway name" value="RNA Polymerase II Transcription Termination"/>
</dbReference>
<dbReference type="Reactome" id="R-MMU-975957">
    <property type="pathway name" value="Nonsense Mediated Decay (NMD) enhanced by the Exon Junction Complex (EJC)"/>
</dbReference>
<dbReference type="BioGRID-ORCS" id="192170">
    <property type="hits" value="34 hits in 80 CRISPR screens"/>
</dbReference>
<dbReference type="CD-CODE" id="CE726F99">
    <property type="entry name" value="Postsynaptic density"/>
</dbReference>
<dbReference type="CD-CODE" id="DE1E139C">
    <property type="entry name" value="Chromatoid body"/>
</dbReference>
<dbReference type="ChiTaRS" id="Eif4a3">
    <property type="organism name" value="mouse"/>
</dbReference>
<dbReference type="PRO" id="PR:Q91VC3"/>
<dbReference type="Proteomes" id="UP000000589">
    <property type="component" value="Chromosome 11"/>
</dbReference>
<dbReference type="RNAct" id="Q91VC3">
    <property type="molecule type" value="protein"/>
</dbReference>
<dbReference type="Bgee" id="ENSMUSG00000025580">
    <property type="expression patterns" value="Expressed in blastoderm cell in morula and 79 other cell types or tissues"/>
</dbReference>
<dbReference type="ExpressionAtlas" id="Q91VC3">
    <property type="expression patterns" value="baseline and differential"/>
</dbReference>
<dbReference type="GO" id="GO:0005737">
    <property type="term" value="C:cytoplasm"/>
    <property type="evidence" value="ECO:0007669"/>
    <property type="project" value="UniProtKB-SubCell"/>
</dbReference>
<dbReference type="GO" id="GO:0035145">
    <property type="term" value="C:exon-exon junction complex"/>
    <property type="evidence" value="ECO:0000266"/>
    <property type="project" value="ComplexPortal"/>
</dbReference>
<dbReference type="GO" id="GO:0016607">
    <property type="term" value="C:nuclear speck"/>
    <property type="evidence" value="ECO:0007669"/>
    <property type="project" value="UniProtKB-SubCell"/>
</dbReference>
<dbReference type="GO" id="GO:0005634">
    <property type="term" value="C:nucleus"/>
    <property type="evidence" value="ECO:0000314"/>
    <property type="project" value="MGI"/>
</dbReference>
<dbReference type="GO" id="GO:0071006">
    <property type="term" value="C:U2-type catalytic step 1 spliceosome"/>
    <property type="evidence" value="ECO:0000250"/>
    <property type="project" value="UniProtKB"/>
</dbReference>
<dbReference type="GO" id="GO:0005524">
    <property type="term" value="F:ATP binding"/>
    <property type="evidence" value="ECO:0007669"/>
    <property type="project" value="UniProtKB-KW"/>
</dbReference>
<dbReference type="GO" id="GO:0016887">
    <property type="term" value="F:ATP hydrolysis activity"/>
    <property type="evidence" value="ECO:0007669"/>
    <property type="project" value="RHEA"/>
</dbReference>
<dbReference type="GO" id="GO:0003723">
    <property type="term" value="F:RNA binding"/>
    <property type="evidence" value="ECO:0007669"/>
    <property type="project" value="UniProtKB-KW"/>
</dbReference>
<dbReference type="GO" id="GO:0003724">
    <property type="term" value="F:RNA helicase activity"/>
    <property type="evidence" value="ECO:0007669"/>
    <property type="project" value="UniProtKB-EC"/>
</dbReference>
<dbReference type="GO" id="GO:0048701">
    <property type="term" value="P:embryonic cranial skeleton morphogenesis"/>
    <property type="evidence" value="ECO:0000250"/>
    <property type="project" value="UniProtKB"/>
</dbReference>
<dbReference type="GO" id="GO:0006406">
    <property type="term" value="P:mRNA export from nucleus"/>
    <property type="evidence" value="ECO:0000303"/>
    <property type="project" value="ComplexPortal"/>
</dbReference>
<dbReference type="GO" id="GO:0000398">
    <property type="term" value="P:mRNA splicing, via spliceosome"/>
    <property type="evidence" value="ECO:0000250"/>
    <property type="project" value="UniProtKB"/>
</dbReference>
<dbReference type="GO" id="GO:0000184">
    <property type="term" value="P:nuclear-transcribed mRNA catabolic process, nonsense-mediated decay"/>
    <property type="evidence" value="ECO:0007669"/>
    <property type="project" value="UniProtKB-KW"/>
</dbReference>
<dbReference type="GO" id="GO:0048026">
    <property type="term" value="P:positive regulation of mRNA splicing, via spliceosome"/>
    <property type="evidence" value="ECO:0000315"/>
    <property type="project" value="MGI"/>
</dbReference>
<dbReference type="GO" id="GO:0045944">
    <property type="term" value="P:positive regulation of transcription by RNA polymerase II"/>
    <property type="evidence" value="ECO:0000314"/>
    <property type="project" value="MGI"/>
</dbReference>
<dbReference type="GO" id="GO:0000381">
    <property type="term" value="P:regulation of alternative mRNA splicing, via spliceosome"/>
    <property type="evidence" value="ECO:0000250"/>
    <property type="project" value="UniProtKB"/>
</dbReference>
<dbReference type="GO" id="GO:2000622">
    <property type="term" value="P:regulation of nuclear-transcribed mRNA catabolic process, nonsense-mediated decay"/>
    <property type="evidence" value="ECO:0000266"/>
    <property type="project" value="ComplexPortal"/>
</dbReference>
<dbReference type="GO" id="GO:0006417">
    <property type="term" value="P:regulation of translation"/>
    <property type="evidence" value="ECO:0007669"/>
    <property type="project" value="UniProtKB-KW"/>
</dbReference>
<dbReference type="GO" id="GO:0006364">
    <property type="term" value="P:rRNA processing"/>
    <property type="evidence" value="ECO:0007669"/>
    <property type="project" value="UniProtKB-KW"/>
</dbReference>
<dbReference type="CDD" id="cd18045">
    <property type="entry name" value="DEADc_EIF4AIII_DDX48"/>
    <property type="match status" value="1"/>
</dbReference>
<dbReference type="CDD" id="cd18787">
    <property type="entry name" value="SF2_C_DEAD"/>
    <property type="match status" value="1"/>
</dbReference>
<dbReference type="FunFam" id="3.40.50.300:FF:000031">
    <property type="entry name" value="Eukaryotic initiation factor 4A-III"/>
    <property type="match status" value="1"/>
</dbReference>
<dbReference type="FunFam" id="3.40.50.300:FF:000498">
    <property type="entry name" value="Eukaryotic initiation factor 4A-III"/>
    <property type="match status" value="1"/>
</dbReference>
<dbReference type="Gene3D" id="3.40.50.300">
    <property type="entry name" value="P-loop containing nucleotide triphosphate hydrolases"/>
    <property type="match status" value="2"/>
</dbReference>
<dbReference type="InterPro" id="IPR011545">
    <property type="entry name" value="DEAD/DEAH_box_helicase_dom"/>
</dbReference>
<dbReference type="InterPro" id="IPR014001">
    <property type="entry name" value="Helicase_ATP-bd"/>
</dbReference>
<dbReference type="InterPro" id="IPR001650">
    <property type="entry name" value="Helicase_C-like"/>
</dbReference>
<dbReference type="InterPro" id="IPR027417">
    <property type="entry name" value="P-loop_NTPase"/>
</dbReference>
<dbReference type="InterPro" id="IPR000629">
    <property type="entry name" value="RNA-helicase_DEAD-box_CS"/>
</dbReference>
<dbReference type="InterPro" id="IPR014014">
    <property type="entry name" value="RNA_helicase_DEAD_Q_motif"/>
</dbReference>
<dbReference type="PANTHER" id="PTHR47958">
    <property type="entry name" value="ATP-DEPENDENT RNA HELICASE DBP3"/>
    <property type="match status" value="1"/>
</dbReference>
<dbReference type="Pfam" id="PF00270">
    <property type="entry name" value="DEAD"/>
    <property type="match status" value="1"/>
</dbReference>
<dbReference type="Pfam" id="PF00271">
    <property type="entry name" value="Helicase_C"/>
    <property type="match status" value="1"/>
</dbReference>
<dbReference type="SMART" id="SM00487">
    <property type="entry name" value="DEXDc"/>
    <property type="match status" value="1"/>
</dbReference>
<dbReference type="SMART" id="SM00490">
    <property type="entry name" value="HELICc"/>
    <property type="match status" value="1"/>
</dbReference>
<dbReference type="SUPFAM" id="SSF52540">
    <property type="entry name" value="P-loop containing nucleoside triphosphate hydrolases"/>
    <property type="match status" value="1"/>
</dbReference>
<dbReference type="PROSITE" id="PS00039">
    <property type="entry name" value="DEAD_ATP_HELICASE"/>
    <property type="match status" value="1"/>
</dbReference>
<dbReference type="PROSITE" id="PS51192">
    <property type="entry name" value="HELICASE_ATP_BIND_1"/>
    <property type="match status" value="1"/>
</dbReference>
<dbReference type="PROSITE" id="PS51194">
    <property type="entry name" value="HELICASE_CTER"/>
    <property type="match status" value="1"/>
</dbReference>
<dbReference type="PROSITE" id="PS51195">
    <property type="entry name" value="Q_MOTIF"/>
    <property type="match status" value="1"/>
</dbReference>
<feature type="chain" id="PRO_0000423269" description="Eukaryotic initiation factor 4A-III">
    <location>
        <begin position="1"/>
        <end position="411"/>
    </location>
</feature>
<feature type="initiator methionine" description="Removed; alternate" evidence="1">
    <location>
        <position position="1"/>
    </location>
</feature>
<feature type="chain" id="PRO_0000054944" description="Eukaryotic initiation factor 4A-III, N-terminally processed">
    <location>
        <begin position="2"/>
        <end position="411"/>
    </location>
</feature>
<feature type="domain" description="Helicase ATP-binding" evidence="5">
    <location>
        <begin position="69"/>
        <end position="239"/>
    </location>
</feature>
<feature type="domain" description="Helicase C-terminal" evidence="6">
    <location>
        <begin position="250"/>
        <end position="411"/>
    </location>
</feature>
<feature type="short sequence motif" description="Q motif">
    <location>
        <begin position="38"/>
        <end position="66"/>
    </location>
</feature>
<feature type="short sequence motif" description="DEAD box" evidence="7">
    <location>
        <begin position="187"/>
        <end position="190"/>
    </location>
</feature>
<feature type="binding site" evidence="1">
    <location>
        <position position="60"/>
    </location>
    <ligand>
        <name>ATP</name>
        <dbReference type="ChEBI" id="CHEBI:30616"/>
    </ligand>
</feature>
<feature type="binding site" evidence="1">
    <location>
        <position position="65"/>
    </location>
    <ligand>
        <name>ATP</name>
        <dbReference type="ChEBI" id="CHEBI:30616"/>
    </ligand>
</feature>
<feature type="binding site" evidence="5">
    <location>
        <begin position="85"/>
        <end position="90"/>
    </location>
    <ligand>
        <name>ATP</name>
        <dbReference type="ChEBI" id="CHEBI:30616"/>
    </ligand>
</feature>
<feature type="binding site" evidence="1">
    <location>
        <position position="342"/>
    </location>
    <ligand>
        <name>ATP</name>
        <dbReference type="ChEBI" id="CHEBI:30616"/>
    </ligand>
</feature>
<feature type="binding site" evidence="5">
    <location>
        <begin position="367"/>
        <end position="371"/>
    </location>
    <ligand>
        <name>ATP</name>
        <dbReference type="ChEBI" id="CHEBI:30616"/>
    </ligand>
</feature>
<feature type="modified residue" description="N-acetylmethionine" evidence="1">
    <location>
        <position position="1"/>
    </location>
</feature>
<feature type="modified residue" description="N-acetylalanine; in Eukaryotic initiation factor 4A-III, N-terminally processed" evidence="1">
    <location>
        <position position="2"/>
    </location>
</feature>
<feature type="modified residue" description="Phosphoserine" evidence="2">
    <location>
        <position position="10"/>
    </location>
</feature>
<feature type="modified residue" description="Phosphoserine" evidence="1">
    <location>
        <position position="12"/>
    </location>
</feature>
<feature type="modified residue" description="N6-acetyllysine" evidence="2">
    <location>
        <position position="124"/>
    </location>
</feature>
<feature type="modified residue" description="Phosphothreonine" evidence="1">
    <location>
        <position position="163"/>
    </location>
</feature>
<feature type="modified residue" description="N6-acetyllysine" evidence="3">
    <location>
        <position position="198"/>
    </location>
</feature>
<feature type="modified residue" description="N6-acetyllysine" evidence="1">
    <location>
        <position position="296"/>
    </location>
</feature>
<feature type="modified residue" description="N6-acetyllysine" evidence="1">
    <location>
        <position position="321"/>
    </location>
</feature>
<feature type="cross-link" description="Glycyl lysine isopeptide (Lys-Gly) (interchain with G-Cter in SUMO2)" evidence="1">
    <location>
        <position position="19"/>
    </location>
</feature>
<feature type="cross-link" description="Glycyl lysine isopeptide (Lys-Gly) (interchain with G-Cter in SUMO2)" evidence="2">
    <location>
        <position position="152"/>
    </location>
</feature>
<feature type="cross-link" description="Glycyl lysine isopeptide (Lys-Gly) (interchain with G-Cter in SUMO2)" evidence="1">
    <location>
        <position position="314"/>
    </location>
</feature>
<feature type="cross-link" description="Glycyl lysine isopeptide (Lys-Gly) (interchain with G-Cter in SUMO2)" evidence="2">
    <location>
        <position position="374"/>
    </location>
</feature>
<feature type="cross-link" description="Glycyl lysine isopeptide (Lys-Gly) (interchain with G-Cter in SUMO2)" evidence="1">
    <location>
        <position position="382"/>
    </location>
</feature>
<feature type="sequence conflict" description="In Ref. 4; AAI58084." evidence="7" ref="4">
    <original>AN</original>
    <variation>TT</variation>
    <location>
        <begin position="3"/>
        <end position="4"/>
    </location>
</feature>
<feature type="sequence conflict" description="In Ref. 4; AAI58084." evidence="7" ref="4">
    <original>T</original>
    <variation>R</variation>
    <location>
        <position position="6"/>
    </location>
</feature>
<feature type="sequence conflict" description="In Ref. 4; AAI58084." evidence="7" ref="4">
    <original>G</original>
    <variation>V</variation>
    <location>
        <position position="11"/>
    </location>
</feature>
<feature type="sequence conflict" description="In Ref. 4; AAI58084." evidence="7" ref="4">
    <original>D</original>
    <variation>G</variation>
    <location>
        <position position="22"/>
    </location>
</feature>
<feature type="sequence conflict" description="In Ref. 4; AAI58084." evidence="7" ref="4">
    <original>V</original>
    <variation>R</variation>
    <location>
        <position position="36"/>
    </location>
</feature>
<feature type="sequence conflict" description="In Ref. 4; AAI58084." evidence="7" ref="4">
    <original>P</original>
    <variation>L</variation>
    <location>
        <position position="38"/>
    </location>
</feature>
<feature type="sequence conflict" description="In Ref. 1; BAC36054." evidence="7" ref="1">
    <original>E</original>
    <variation>G</variation>
    <location>
        <position position="47"/>
    </location>
</feature>
<feature type="sequence conflict" description="In Ref. 4; AAI58084." evidence="7" ref="4">
    <original>V</original>
    <variation>I</variation>
    <location>
        <position position="94"/>
    </location>
</feature>
<feature type="sequence conflict" description="In Ref. 4; AAI58084." evidence="7" ref="4">
    <original>R</original>
    <variation>P</variation>
    <location>
        <position position="177"/>
    </location>
</feature>
<feature type="sequence conflict" description="In Ref. 1; BAE41100." evidence="7" ref="1">
    <original>Q</original>
    <variation>L</variation>
    <location>
        <position position="200"/>
    </location>
</feature>
<feature type="sequence conflict" description="In Ref. 4; AAI58084." evidence="7" ref="4">
    <original>D</original>
    <variation>H</variation>
    <location>
        <position position="235"/>
    </location>
</feature>
<feature type="sequence conflict" description="In Ref. 4; AAI58084." evidence="7" ref="4">
    <original>N</original>
    <variation>I</variation>
    <location>
        <position position="285"/>
    </location>
</feature>
<feature type="sequence conflict" description="In Ref. 4; AAI58084." evidence="7" ref="4">
    <original>V</original>
    <variation>L</variation>
    <location>
        <position position="407"/>
    </location>
</feature>
<evidence type="ECO:0000250" key="1">
    <source>
        <dbReference type="UniProtKB" id="P38919"/>
    </source>
</evidence>
<evidence type="ECO:0000250" key="2">
    <source>
        <dbReference type="UniProtKB" id="P60842"/>
    </source>
</evidence>
<evidence type="ECO:0000250" key="3">
    <source>
        <dbReference type="UniProtKB" id="P60843"/>
    </source>
</evidence>
<evidence type="ECO:0000250" key="4">
    <source>
        <dbReference type="UniProtKB" id="Q3B8Q2"/>
    </source>
</evidence>
<evidence type="ECO:0000255" key="5">
    <source>
        <dbReference type="PROSITE-ProRule" id="PRU00541"/>
    </source>
</evidence>
<evidence type="ECO:0000255" key="6">
    <source>
        <dbReference type="PROSITE-ProRule" id="PRU00542"/>
    </source>
</evidence>
<evidence type="ECO:0000305" key="7"/>
<reference key="1">
    <citation type="journal article" date="2005" name="Science">
        <title>The transcriptional landscape of the mammalian genome.</title>
        <authorList>
            <person name="Carninci P."/>
            <person name="Kasukawa T."/>
            <person name="Katayama S."/>
            <person name="Gough J."/>
            <person name="Frith M.C."/>
            <person name="Maeda N."/>
            <person name="Oyama R."/>
            <person name="Ravasi T."/>
            <person name="Lenhard B."/>
            <person name="Wells C."/>
            <person name="Kodzius R."/>
            <person name="Shimokawa K."/>
            <person name="Bajic V.B."/>
            <person name="Brenner S.E."/>
            <person name="Batalov S."/>
            <person name="Forrest A.R."/>
            <person name="Zavolan M."/>
            <person name="Davis M.J."/>
            <person name="Wilming L.G."/>
            <person name="Aidinis V."/>
            <person name="Allen J.E."/>
            <person name="Ambesi-Impiombato A."/>
            <person name="Apweiler R."/>
            <person name="Aturaliya R.N."/>
            <person name="Bailey T.L."/>
            <person name="Bansal M."/>
            <person name="Baxter L."/>
            <person name="Beisel K.W."/>
            <person name="Bersano T."/>
            <person name="Bono H."/>
            <person name="Chalk A.M."/>
            <person name="Chiu K.P."/>
            <person name="Choudhary V."/>
            <person name="Christoffels A."/>
            <person name="Clutterbuck D.R."/>
            <person name="Crowe M.L."/>
            <person name="Dalla E."/>
            <person name="Dalrymple B.P."/>
            <person name="de Bono B."/>
            <person name="Della Gatta G."/>
            <person name="di Bernardo D."/>
            <person name="Down T."/>
            <person name="Engstrom P."/>
            <person name="Fagiolini M."/>
            <person name="Faulkner G."/>
            <person name="Fletcher C.F."/>
            <person name="Fukushima T."/>
            <person name="Furuno M."/>
            <person name="Futaki S."/>
            <person name="Gariboldi M."/>
            <person name="Georgii-Hemming P."/>
            <person name="Gingeras T.R."/>
            <person name="Gojobori T."/>
            <person name="Green R.E."/>
            <person name="Gustincich S."/>
            <person name="Harbers M."/>
            <person name="Hayashi Y."/>
            <person name="Hensch T.K."/>
            <person name="Hirokawa N."/>
            <person name="Hill D."/>
            <person name="Huminiecki L."/>
            <person name="Iacono M."/>
            <person name="Ikeo K."/>
            <person name="Iwama A."/>
            <person name="Ishikawa T."/>
            <person name="Jakt M."/>
            <person name="Kanapin A."/>
            <person name="Katoh M."/>
            <person name="Kawasawa Y."/>
            <person name="Kelso J."/>
            <person name="Kitamura H."/>
            <person name="Kitano H."/>
            <person name="Kollias G."/>
            <person name="Krishnan S.P."/>
            <person name="Kruger A."/>
            <person name="Kummerfeld S.K."/>
            <person name="Kurochkin I.V."/>
            <person name="Lareau L.F."/>
            <person name="Lazarevic D."/>
            <person name="Lipovich L."/>
            <person name="Liu J."/>
            <person name="Liuni S."/>
            <person name="McWilliam S."/>
            <person name="Madan Babu M."/>
            <person name="Madera M."/>
            <person name="Marchionni L."/>
            <person name="Matsuda H."/>
            <person name="Matsuzawa S."/>
            <person name="Miki H."/>
            <person name="Mignone F."/>
            <person name="Miyake S."/>
            <person name="Morris K."/>
            <person name="Mottagui-Tabar S."/>
            <person name="Mulder N."/>
            <person name="Nakano N."/>
            <person name="Nakauchi H."/>
            <person name="Ng P."/>
            <person name="Nilsson R."/>
            <person name="Nishiguchi S."/>
            <person name="Nishikawa S."/>
            <person name="Nori F."/>
            <person name="Ohara O."/>
            <person name="Okazaki Y."/>
            <person name="Orlando V."/>
            <person name="Pang K.C."/>
            <person name="Pavan W.J."/>
            <person name="Pavesi G."/>
            <person name="Pesole G."/>
            <person name="Petrovsky N."/>
            <person name="Piazza S."/>
            <person name="Reed J."/>
            <person name="Reid J.F."/>
            <person name="Ring B.Z."/>
            <person name="Ringwald M."/>
            <person name="Rost B."/>
            <person name="Ruan Y."/>
            <person name="Salzberg S.L."/>
            <person name="Sandelin A."/>
            <person name="Schneider C."/>
            <person name="Schoenbach C."/>
            <person name="Sekiguchi K."/>
            <person name="Semple C.A."/>
            <person name="Seno S."/>
            <person name="Sessa L."/>
            <person name="Sheng Y."/>
            <person name="Shibata Y."/>
            <person name="Shimada H."/>
            <person name="Shimada K."/>
            <person name="Silva D."/>
            <person name="Sinclair B."/>
            <person name="Sperling S."/>
            <person name="Stupka E."/>
            <person name="Sugiura K."/>
            <person name="Sultana R."/>
            <person name="Takenaka Y."/>
            <person name="Taki K."/>
            <person name="Tammoja K."/>
            <person name="Tan S.L."/>
            <person name="Tang S."/>
            <person name="Taylor M.S."/>
            <person name="Tegner J."/>
            <person name="Teichmann S.A."/>
            <person name="Ueda H.R."/>
            <person name="van Nimwegen E."/>
            <person name="Verardo R."/>
            <person name="Wei C.L."/>
            <person name="Yagi K."/>
            <person name="Yamanishi H."/>
            <person name="Zabarovsky E."/>
            <person name="Zhu S."/>
            <person name="Zimmer A."/>
            <person name="Hide W."/>
            <person name="Bult C."/>
            <person name="Grimmond S.M."/>
            <person name="Teasdale R.D."/>
            <person name="Liu E.T."/>
            <person name="Brusic V."/>
            <person name="Quackenbush J."/>
            <person name="Wahlestedt C."/>
            <person name="Mattick J.S."/>
            <person name="Hume D.A."/>
            <person name="Kai C."/>
            <person name="Sasaki D."/>
            <person name="Tomaru Y."/>
            <person name="Fukuda S."/>
            <person name="Kanamori-Katayama M."/>
            <person name="Suzuki M."/>
            <person name="Aoki J."/>
            <person name="Arakawa T."/>
            <person name="Iida J."/>
            <person name="Imamura K."/>
            <person name="Itoh M."/>
            <person name="Kato T."/>
            <person name="Kawaji H."/>
            <person name="Kawagashira N."/>
            <person name="Kawashima T."/>
            <person name="Kojima M."/>
            <person name="Kondo S."/>
            <person name="Konno H."/>
            <person name="Nakano K."/>
            <person name="Ninomiya N."/>
            <person name="Nishio T."/>
            <person name="Okada M."/>
            <person name="Plessy C."/>
            <person name="Shibata K."/>
            <person name="Shiraki T."/>
            <person name="Suzuki S."/>
            <person name="Tagami M."/>
            <person name="Waki K."/>
            <person name="Watahiki A."/>
            <person name="Okamura-Oho Y."/>
            <person name="Suzuki H."/>
            <person name="Kawai J."/>
            <person name="Hayashizaki Y."/>
        </authorList>
    </citation>
    <scope>NUCLEOTIDE SEQUENCE [LARGE SCALE MRNA]</scope>
    <source>
        <strain>BALB/cJ</strain>
        <strain>C57BL/6J</strain>
        <strain>DBA/2J</strain>
        <strain>NOD</strain>
        <tissue>Bone marrow</tissue>
        <tissue>Thymus</tissue>
    </source>
</reference>
<reference key="2">
    <citation type="journal article" date="2009" name="PLoS Biol.">
        <title>Lineage-specific biology revealed by a finished genome assembly of the mouse.</title>
        <authorList>
            <person name="Church D.M."/>
            <person name="Goodstadt L."/>
            <person name="Hillier L.W."/>
            <person name="Zody M.C."/>
            <person name="Goldstein S."/>
            <person name="She X."/>
            <person name="Bult C.J."/>
            <person name="Agarwala R."/>
            <person name="Cherry J.L."/>
            <person name="DiCuccio M."/>
            <person name="Hlavina W."/>
            <person name="Kapustin Y."/>
            <person name="Meric P."/>
            <person name="Maglott D."/>
            <person name="Birtle Z."/>
            <person name="Marques A.C."/>
            <person name="Graves T."/>
            <person name="Zhou S."/>
            <person name="Teague B."/>
            <person name="Potamousis K."/>
            <person name="Churas C."/>
            <person name="Place M."/>
            <person name="Herschleb J."/>
            <person name="Runnheim R."/>
            <person name="Forrest D."/>
            <person name="Amos-Landgraf J."/>
            <person name="Schwartz D.C."/>
            <person name="Cheng Z."/>
            <person name="Lindblad-Toh K."/>
            <person name="Eichler E.E."/>
            <person name="Ponting C.P."/>
        </authorList>
    </citation>
    <scope>NUCLEOTIDE SEQUENCE [LARGE SCALE GENOMIC DNA]</scope>
    <source>
        <strain>C57BL/6J</strain>
    </source>
</reference>
<reference key="3">
    <citation type="submission" date="2005-07" db="EMBL/GenBank/DDBJ databases">
        <authorList>
            <person name="Mural R.J."/>
            <person name="Adams M.D."/>
            <person name="Myers E.W."/>
            <person name="Smith H.O."/>
            <person name="Venter J.C."/>
        </authorList>
    </citation>
    <scope>NUCLEOTIDE SEQUENCE [LARGE SCALE GENOMIC DNA]</scope>
</reference>
<reference key="4">
    <citation type="journal article" date="2004" name="Genome Res.">
        <title>The status, quality, and expansion of the NIH full-length cDNA project: the Mammalian Gene Collection (MGC).</title>
        <authorList>
            <consortium name="The MGC Project Team"/>
        </authorList>
    </citation>
    <scope>NUCLEOTIDE SEQUENCE [LARGE SCALE MRNA]</scope>
</reference>
<reference key="5">
    <citation type="journal article" date="2010" name="Cell">
        <title>A tissue-specific atlas of mouse protein phosphorylation and expression.</title>
        <authorList>
            <person name="Huttlin E.L."/>
            <person name="Jedrychowski M.P."/>
            <person name="Elias J.E."/>
            <person name="Goswami T."/>
            <person name="Rad R."/>
            <person name="Beausoleil S.A."/>
            <person name="Villen J."/>
            <person name="Haas W."/>
            <person name="Sowa M.E."/>
            <person name="Gygi S.P."/>
        </authorList>
    </citation>
    <scope>IDENTIFICATION BY MASS SPECTROMETRY [LARGE SCALE ANALYSIS]</scope>
    <source>
        <tissue>Spleen</tissue>
    </source>
</reference>